<reference key="1">
    <citation type="submission" date="2009-01" db="EMBL/GenBank/DDBJ databases">
        <title>Complete sequence of Geobacter sp. FRC-32.</title>
        <authorList>
            <consortium name="US DOE Joint Genome Institute"/>
            <person name="Lucas S."/>
            <person name="Copeland A."/>
            <person name="Lapidus A."/>
            <person name="Glavina del Rio T."/>
            <person name="Dalin E."/>
            <person name="Tice H."/>
            <person name="Bruce D."/>
            <person name="Goodwin L."/>
            <person name="Pitluck S."/>
            <person name="Saunders E."/>
            <person name="Brettin T."/>
            <person name="Detter J.C."/>
            <person name="Han C."/>
            <person name="Larimer F."/>
            <person name="Land M."/>
            <person name="Hauser L."/>
            <person name="Kyrpides N."/>
            <person name="Ovchinnikova G."/>
            <person name="Kostka J."/>
            <person name="Richardson P."/>
        </authorList>
    </citation>
    <scope>NUCLEOTIDE SEQUENCE [LARGE SCALE GENOMIC DNA]</scope>
    <source>
        <strain>DSM 22248 / JCM 15807 / FRC-32</strain>
    </source>
</reference>
<comment type="function">
    <text evidence="1">Protein S19 forms a complex with S13 that binds strongly to the 16S ribosomal RNA.</text>
</comment>
<comment type="similarity">
    <text evidence="1">Belongs to the universal ribosomal protein uS19 family.</text>
</comment>
<evidence type="ECO:0000255" key="1">
    <source>
        <dbReference type="HAMAP-Rule" id="MF_00531"/>
    </source>
</evidence>
<evidence type="ECO:0000305" key="2"/>
<keyword id="KW-1185">Reference proteome</keyword>
<keyword id="KW-0687">Ribonucleoprotein</keyword>
<keyword id="KW-0689">Ribosomal protein</keyword>
<keyword id="KW-0694">RNA-binding</keyword>
<keyword id="KW-0699">rRNA-binding</keyword>
<name>RS19_GEODF</name>
<sequence length="93" mass="10374">MARSIKKGPFVDAHLEAKVQAEGASSKKVIKTWSRRSTITPDFIGLTFAVHNGRKFIPVFVTENMVGHKMGEFAPTRTFFGHAADKKSKLKKK</sequence>
<feature type="chain" id="PRO_1000146392" description="Small ribosomal subunit protein uS19">
    <location>
        <begin position="1"/>
        <end position="93"/>
    </location>
</feature>
<proteinExistence type="inferred from homology"/>
<organism>
    <name type="scientific">Geotalea daltonii (strain DSM 22248 / JCM 15807 / FRC-32)</name>
    <name type="common">Geobacter daltonii</name>
    <dbReference type="NCBI Taxonomy" id="316067"/>
    <lineage>
        <taxon>Bacteria</taxon>
        <taxon>Pseudomonadati</taxon>
        <taxon>Thermodesulfobacteriota</taxon>
        <taxon>Desulfuromonadia</taxon>
        <taxon>Geobacterales</taxon>
        <taxon>Geobacteraceae</taxon>
        <taxon>Geotalea</taxon>
    </lineage>
</organism>
<dbReference type="EMBL" id="CP001390">
    <property type="protein sequence ID" value="ACM21962.1"/>
    <property type="molecule type" value="Genomic_DNA"/>
</dbReference>
<dbReference type="RefSeq" id="WP_012648689.1">
    <property type="nucleotide sequence ID" value="NC_011979.1"/>
</dbReference>
<dbReference type="SMR" id="B9M6H4"/>
<dbReference type="STRING" id="316067.Geob_3621"/>
<dbReference type="KEGG" id="geo:Geob_3621"/>
<dbReference type="eggNOG" id="COG0185">
    <property type="taxonomic scope" value="Bacteria"/>
</dbReference>
<dbReference type="HOGENOM" id="CLU_144911_0_1_7"/>
<dbReference type="OrthoDB" id="9797833at2"/>
<dbReference type="Proteomes" id="UP000007721">
    <property type="component" value="Chromosome"/>
</dbReference>
<dbReference type="GO" id="GO:0005737">
    <property type="term" value="C:cytoplasm"/>
    <property type="evidence" value="ECO:0007669"/>
    <property type="project" value="UniProtKB-ARBA"/>
</dbReference>
<dbReference type="GO" id="GO:0015935">
    <property type="term" value="C:small ribosomal subunit"/>
    <property type="evidence" value="ECO:0007669"/>
    <property type="project" value="InterPro"/>
</dbReference>
<dbReference type="GO" id="GO:0019843">
    <property type="term" value="F:rRNA binding"/>
    <property type="evidence" value="ECO:0007669"/>
    <property type="project" value="UniProtKB-UniRule"/>
</dbReference>
<dbReference type="GO" id="GO:0003735">
    <property type="term" value="F:structural constituent of ribosome"/>
    <property type="evidence" value="ECO:0007669"/>
    <property type="project" value="InterPro"/>
</dbReference>
<dbReference type="GO" id="GO:0000028">
    <property type="term" value="P:ribosomal small subunit assembly"/>
    <property type="evidence" value="ECO:0007669"/>
    <property type="project" value="TreeGrafter"/>
</dbReference>
<dbReference type="GO" id="GO:0006412">
    <property type="term" value="P:translation"/>
    <property type="evidence" value="ECO:0007669"/>
    <property type="project" value="UniProtKB-UniRule"/>
</dbReference>
<dbReference type="FunFam" id="3.30.860.10:FF:000001">
    <property type="entry name" value="30S ribosomal protein S19"/>
    <property type="match status" value="1"/>
</dbReference>
<dbReference type="Gene3D" id="3.30.860.10">
    <property type="entry name" value="30s Ribosomal Protein S19, Chain A"/>
    <property type="match status" value="1"/>
</dbReference>
<dbReference type="HAMAP" id="MF_00531">
    <property type="entry name" value="Ribosomal_uS19"/>
    <property type="match status" value="1"/>
</dbReference>
<dbReference type="InterPro" id="IPR002222">
    <property type="entry name" value="Ribosomal_uS19"/>
</dbReference>
<dbReference type="InterPro" id="IPR005732">
    <property type="entry name" value="Ribosomal_uS19_bac-type"/>
</dbReference>
<dbReference type="InterPro" id="IPR023575">
    <property type="entry name" value="Ribosomal_uS19_SF"/>
</dbReference>
<dbReference type="NCBIfam" id="TIGR01050">
    <property type="entry name" value="rpsS_bact"/>
    <property type="match status" value="1"/>
</dbReference>
<dbReference type="PANTHER" id="PTHR11880">
    <property type="entry name" value="RIBOSOMAL PROTEIN S19P FAMILY MEMBER"/>
    <property type="match status" value="1"/>
</dbReference>
<dbReference type="PANTHER" id="PTHR11880:SF8">
    <property type="entry name" value="SMALL RIBOSOMAL SUBUNIT PROTEIN US19M"/>
    <property type="match status" value="1"/>
</dbReference>
<dbReference type="Pfam" id="PF00203">
    <property type="entry name" value="Ribosomal_S19"/>
    <property type="match status" value="1"/>
</dbReference>
<dbReference type="PIRSF" id="PIRSF002144">
    <property type="entry name" value="Ribosomal_S19"/>
    <property type="match status" value="1"/>
</dbReference>
<dbReference type="PRINTS" id="PR00975">
    <property type="entry name" value="RIBOSOMALS19"/>
</dbReference>
<dbReference type="SUPFAM" id="SSF54570">
    <property type="entry name" value="Ribosomal protein S19"/>
    <property type="match status" value="1"/>
</dbReference>
<accession>B9M6H4</accession>
<protein>
    <recommendedName>
        <fullName evidence="1">Small ribosomal subunit protein uS19</fullName>
    </recommendedName>
    <alternativeName>
        <fullName evidence="2">30S ribosomal protein S19</fullName>
    </alternativeName>
</protein>
<gene>
    <name evidence="1" type="primary">rpsS</name>
    <name type="ordered locus">Geob_3621</name>
</gene>